<sequence>MLQLLLAVFIGGGTGSVARWMLSMRFNPLHQAIPIGTLTANLLGAFIIGMGFAWFNRMTHIDPMWKVLITTGFCGGLTTFSTFSAEVVFLLQEGRFGWALLNVLINLLGSFAMTALAFWLFSAAAAR</sequence>
<dbReference type="EMBL" id="CP000857">
    <property type="protein sequence ID" value="ACN44822.1"/>
    <property type="molecule type" value="Genomic_DNA"/>
</dbReference>
<dbReference type="RefSeq" id="WP_000939753.1">
    <property type="nucleotide sequence ID" value="NC_012125.1"/>
</dbReference>
<dbReference type="SMR" id="C0PW59"/>
<dbReference type="KEGG" id="sei:SPC_0645"/>
<dbReference type="HOGENOM" id="CLU_114342_3_3_6"/>
<dbReference type="Proteomes" id="UP000001599">
    <property type="component" value="Chromosome"/>
</dbReference>
<dbReference type="GO" id="GO:0005886">
    <property type="term" value="C:plasma membrane"/>
    <property type="evidence" value="ECO:0007669"/>
    <property type="project" value="UniProtKB-SubCell"/>
</dbReference>
<dbReference type="GO" id="GO:0062054">
    <property type="term" value="F:fluoride channel activity"/>
    <property type="evidence" value="ECO:0007669"/>
    <property type="project" value="UniProtKB-UniRule"/>
</dbReference>
<dbReference type="GO" id="GO:0046872">
    <property type="term" value="F:metal ion binding"/>
    <property type="evidence" value="ECO:0007669"/>
    <property type="project" value="UniProtKB-KW"/>
</dbReference>
<dbReference type="GO" id="GO:0140114">
    <property type="term" value="P:cellular detoxification of fluoride"/>
    <property type="evidence" value="ECO:0007669"/>
    <property type="project" value="UniProtKB-UniRule"/>
</dbReference>
<dbReference type="HAMAP" id="MF_00454">
    <property type="entry name" value="FluC"/>
    <property type="match status" value="1"/>
</dbReference>
<dbReference type="InterPro" id="IPR003691">
    <property type="entry name" value="FluC"/>
</dbReference>
<dbReference type="NCBIfam" id="TIGR00494">
    <property type="entry name" value="crcB"/>
    <property type="match status" value="1"/>
</dbReference>
<dbReference type="NCBIfam" id="NF010792">
    <property type="entry name" value="PRK14196.1"/>
    <property type="match status" value="1"/>
</dbReference>
<dbReference type="PANTHER" id="PTHR28259">
    <property type="entry name" value="FLUORIDE EXPORT PROTEIN 1-RELATED"/>
    <property type="match status" value="1"/>
</dbReference>
<dbReference type="PANTHER" id="PTHR28259:SF1">
    <property type="entry name" value="FLUORIDE EXPORT PROTEIN 1-RELATED"/>
    <property type="match status" value="1"/>
</dbReference>
<dbReference type="Pfam" id="PF02537">
    <property type="entry name" value="CRCB"/>
    <property type="match status" value="1"/>
</dbReference>
<gene>
    <name evidence="1" type="primary">fluC</name>
    <name evidence="1" type="synonym">crcB</name>
    <name type="ordered locus">SPC_0645</name>
</gene>
<keyword id="KW-0997">Cell inner membrane</keyword>
<keyword id="KW-1003">Cell membrane</keyword>
<keyword id="KW-0407">Ion channel</keyword>
<keyword id="KW-0406">Ion transport</keyword>
<keyword id="KW-0472">Membrane</keyword>
<keyword id="KW-0479">Metal-binding</keyword>
<keyword id="KW-0915">Sodium</keyword>
<keyword id="KW-0812">Transmembrane</keyword>
<keyword id="KW-1133">Transmembrane helix</keyword>
<keyword id="KW-0813">Transport</keyword>
<accession>C0PW59</accession>
<reference key="1">
    <citation type="journal article" date="2009" name="PLoS ONE">
        <title>Salmonella paratyphi C: genetic divergence from Salmonella choleraesuis and pathogenic convergence with Salmonella typhi.</title>
        <authorList>
            <person name="Liu W.-Q."/>
            <person name="Feng Y."/>
            <person name="Wang Y."/>
            <person name="Zou Q.-H."/>
            <person name="Chen F."/>
            <person name="Guo J.-T."/>
            <person name="Peng Y.-H."/>
            <person name="Jin Y."/>
            <person name="Li Y.-G."/>
            <person name="Hu S.-N."/>
            <person name="Johnston R.N."/>
            <person name="Liu G.-R."/>
            <person name="Liu S.-L."/>
        </authorList>
    </citation>
    <scope>NUCLEOTIDE SEQUENCE [LARGE SCALE GENOMIC DNA]</scope>
    <source>
        <strain>RKS4594</strain>
    </source>
</reference>
<organism>
    <name type="scientific">Salmonella paratyphi C (strain RKS4594)</name>
    <dbReference type="NCBI Taxonomy" id="476213"/>
    <lineage>
        <taxon>Bacteria</taxon>
        <taxon>Pseudomonadati</taxon>
        <taxon>Pseudomonadota</taxon>
        <taxon>Gammaproteobacteria</taxon>
        <taxon>Enterobacterales</taxon>
        <taxon>Enterobacteriaceae</taxon>
        <taxon>Salmonella</taxon>
    </lineage>
</organism>
<name>FLUC_SALPC</name>
<protein>
    <recommendedName>
        <fullName evidence="1">Fluoride-specific ion channel FluC</fullName>
    </recommendedName>
</protein>
<feature type="chain" id="PRO_1000135327" description="Fluoride-specific ion channel FluC">
    <location>
        <begin position="1"/>
        <end position="127"/>
    </location>
</feature>
<feature type="transmembrane region" description="Helical" evidence="1">
    <location>
        <begin position="4"/>
        <end position="24"/>
    </location>
</feature>
<feature type="transmembrane region" description="Helical" evidence="1">
    <location>
        <begin position="35"/>
        <end position="55"/>
    </location>
</feature>
<feature type="transmembrane region" description="Helical" evidence="1">
    <location>
        <begin position="71"/>
        <end position="91"/>
    </location>
</feature>
<feature type="transmembrane region" description="Helical" evidence="1">
    <location>
        <begin position="103"/>
        <end position="123"/>
    </location>
</feature>
<feature type="binding site" evidence="1">
    <location>
        <position position="75"/>
    </location>
    <ligand>
        <name>Na(+)</name>
        <dbReference type="ChEBI" id="CHEBI:29101"/>
        <note>structural</note>
    </ligand>
</feature>
<feature type="binding site" evidence="1">
    <location>
        <position position="78"/>
    </location>
    <ligand>
        <name>Na(+)</name>
        <dbReference type="ChEBI" id="CHEBI:29101"/>
        <note>structural</note>
    </ligand>
</feature>
<proteinExistence type="inferred from homology"/>
<comment type="function">
    <text evidence="1">Fluoride-specific ion channel. Important for reducing fluoride concentration in the cell, thus reducing its toxicity.</text>
</comment>
<comment type="catalytic activity">
    <reaction evidence="1">
        <text>fluoride(in) = fluoride(out)</text>
        <dbReference type="Rhea" id="RHEA:76159"/>
        <dbReference type="ChEBI" id="CHEBI:17051"/>
    </reaction>
    <physiologicalReaction direction="left-to-right" evidence="1">
        <dbReference type="Rhea" id="RHEA:76160"/>
    </physiologicalReaction>
</comment>
<comment type="activity regulation">
    <text evidence="1">Na(+) is not transported, but it plays an essential structural role and its presence is essential for fluoride channel function.</text>
</comment>
<comment type="subcellular location">
    <subcellularLocation>
        <location evidence="1">Cell inner membrane</location>
        <topology evidence="1">Multi-pass membrane protein</topology>
    </subcellularLocation>
</comment>
<comment type="similarity">
    <text evidence="1">Belongs to the fluoride channel Fluc/FEX (TC 1.A.43) family.</text>
</comment>
<evidence type="ECO:0000255" key="1">
    <source>
        <dbReference type="HAMAP-Rule" id="MF_00454"/>
    </source>
</evidence>